<gene>
    <name evidence="1" type="primary">xseA</name>
    <name type="ordered locus">Shew185_3000</name>
</gene>
<name>EX7L_SHEB8</name>
<proteinExistence type="inferred from homology"/>
<feature type="chain" id="PRO_1000048785" description="Exodeoxyribonuclease 7 large subunit">
    <location>
        <begin position="1"/>
        <end position="448"/>
    </location>
</feature>
<protein>
    <recommendedName>
        <fullName evidence="1">Exodeoxyribonuclease 7 large subunit</fullName>
        <ecNumber evidence="1">3.1.11.6</ecNumber>
    </recommendedName>
    <alternativeName>
        <fullName evidence="1">Exodeoxyribonuclease VII large subunit</fullName>
        <shortName evidence="1">Exonuclease VII large subunit</shortName>
    </alternativeName>
</protein>
<dbReference type="EC" id="3.1.11.6" evidence="1"/>
<dbReference type="EMBL" id="CP000753">
    <property type="protein sequence ID" value="ABS09131.1"/>
    <property type="molecule type" value="Genomic_DNA"/>
</dbReference>
<dbReference type="RefSeq" id="WP_012089731.1">
    <property type="nucleotide sequence ID" value="NC_009665.1"/>
</dbReference>
<dbReference type="SMR" id="A6WQP2"/>
<dbReference type="KEGG" id="sbm:Shew185_3000"/>
<dbReference type="HOGENOM" id="CLU_023625_3_1_6"/>
<dbReference type="GO" id="GO:0005737">
    <property type="term" value="C:cytoplasm"/>
    <property type="evidence" value="ECO:0007669"/>
    <property type="project" value="UniProtKB-SubCell"/>
</dbReference>
<dbReference type="GO" id="GO:0009318">
    <property type="term" value="C:exodeoxyribonuclease VII complex"/>
    <property type="evidence" value="ECO:0007669"/>
    <property type="project" value="InterPro"/>
</dbReference>
<dbReference type="GO" id="GO:0008855">
    <property type="term" value="F:exodeoxyribonuclease VII activity"/>
    <property type="evidence" value="ECO:0007669"/>
    <property type="project" value="UniProtKB-UniRule"/>
</dbReference>
<dbReference type="GO" id="GO:0003676">
    <property type="term" value="F:nucleic acid binding"/>
    <property type="evidence" value="ECO:0007669"/>
    <property type="project" value="InterPro"/>
</dbReference>
<dbReference type="GO" id="GO:0006308">
    <property type="term" value="P:DNA catabolic process"/>
    <property type="evidence" value="ECO:0007669"/>
    <property type="project" value="UniProtKB-UniRule"/>
</dbReference>
<dbReference type="CDD" id="cd04489">
    <property type="entry name" value="ExoVII_LU_OBF"/>
    <property type="match status" value="1"/>
</dbReference>
<dbReference type="HAMAP" id="MF_00378">
    <property type="entry name" value="Exonuc_7_L"/>
    <property type="match status" value="1"/>
</dbReference>
<dbReference type="InterPro" id="IPR003753">
    <property type="entry name" value="Exonuc_VII_L"/>
</dbReference>
<dbReference type="InterPro" id="IPR020579">
    <property type="entry name" value="Exonuc_VII_lsu_C"/>
</dbReference>
<dbReference type="InterPro" id="IPR025824">
    <property type="entry name" value="OB-fold_nuc-bd_dom"/>
</dbReference>
<dbReference type="NCBIfam" id="TIGR00237">
    <property type="entry name" value="xseA"/>
    <property type="match status" value="1"/>
</dbReference>
<dbReference type="PANTHER" id="PTHR30008">
    <property type="entry name" value="EXODEOXYRIBONUCLEASE 7 LARGE SUBUNIT"/>
    <property type="match status" value="1"/>
</dbReference>
<dbReference type="PANTHER" id="PTHR30008:SF0">
    <property type="entry name" value="EXODEOXYRIBONUCLEASE 7 LARGE SUBUNIT"/>
    <property type="match status" value="1"/>
</dbReference>
<dbReference type="Pfam" id="PF02601">
    <property type="entry name" value="Exonuc_VII_L"/>
    <property type="match status" value="1"/>
</dbReference>
<dbReference type="Pfam" id="PF13742">
    <property type="entry name" value="tRNA_anti_2"/>
    <property type="match status" value="1"/>
</dbReference>
<comment type="function">
    <text evidence="1">Bidirectionally degrades single-stranded DNA into large acid-insoluble oligonucleotides, which are then degraded further into small acid-soluble oligonucleotides.</text>
</comment>
<comment type="catalytic activity">
    <reaction evidence="1">
        <text>Exonucleolytic cleavage in either 5'- to 3'- or 3'- to 5'-direction to yield nucleoside 5'-phosphates.</text>
        <dbReference type="EC" id="3.1.11.6"/>
    </reaction>
</comment>
<comment type="subunit">
    <text evidence="1">Heterooligomer composed of large and small subunits.</text>
</comment>
<comment type="subcellular location">
    <subcellularLocation>
        <location evidence="1">Cytoplasm</location>
    </subcellularLocation>
</comment>
<comment type="similarity">
    <text evidence="1">Belongs to the XseA family.</text>
</comment>
<organism>
    <name type="scientific">Shewanella baltica (strain OS185)</name>
    <dbReference type="NCBI Taxonomy" id="402882"/>
    <lineage>
        <taxon>Bacteria</taxon>
        <taxon>Pseudomonadati</taxon>
        <taxon>Pseudomonadota</taxon>
        <taxon>Gammaproteobacteria</taxon>
        <taxon>Alteromonadales</taxon>
        <taxon>Shewanellaceae</taxon>
        <taxon>Shewanella</taxon>
    </lineage>
</organism>
<reference key="1">
    <citation type="submission" date="2007-07" db="EMBL/GenBank/DDBJ databases">
        <title>Complete sequence of chromosome of Shewanella baltica OS185.</title>
        <authorList>
            <consortium name="US DOE Joint Genome Institute"/>
            <person name="Copeland A."/>
            <person name="Lucas S."/>
            <person name="Lapidus A."/>
            <person name="Barry K."/>
            <person name="Glavina del Rio T."/>
            <person name="Dalin E."/>
            <person name="Tice H."/>
            <person name="Pitluck S."/>
            <person name="Sims D."/>
            <person name="Brettin T."/>
            <person name="Bruce D."/>
            <person name="Detter J.C."/>
            <person name="Han C."/>
            <person name="Schmutz J."/>
            <person name="Larimer F."/>
            <person name="Land M."/>
            <person name="Hauser L."/>
            <person name="Kyrpides N."/>
            <person name="Mikhailova N."/>
            <person name="Brettar I."/>
            <person name="Rodrigues J."/>
            <person name="Konstantinidis K."/>
            <person name="Tiedje J."/>
            <person name="Richardson P."/>
        </authorList>
    </citation>
    <scope>NUCLEOTIDE SEQUENCE [LARGE SCALE GENOMIC DNA]</scope>
    <source>
        <strain>OS185</strain>
    </source>
</reference>
<sequence length="448" mass="49949">MQGTKNNIYTVSRLNGEVRQILEGQLGKIWLNGEISNFSSPSSGHWYLTLKDHSSQIRCAMFKGRNQTVSFKPINGQQVLVKGAISVYEPRGDYQLLIESMLPAGDGLLAQQFDALKMKLAAEGLFAADTKRPLPKNIQRIGVITSPTGAAIRDVLHVLARRDPSIEVIIYPTQVQGETAAQSICQAINIANQRLEVDVLLLTRGGGSLEDLWCFNSEALAHTIYNSALPVVSAVGHEVDTTISDYVADIRAPTPSAGAELLSQDSDNKAQKLATALSRLQQSAKHYQLKQERRLSLLEHRLQRQDPKRTLQQFEQRFDEMQLRLESALSNRLHILSRRQQLLASRLEQQSPKHKLAIEGNRLSYLASRLQDALQDKLSQSEQRIKYAAHQLETVSPLATLSRGYSITTDIHNQVVDSTDKLTIGDSLQTRLRHGQVISTVTQIKPLE</sequence>
<evidence type="ECO:0000255" key="1">
    <source>
        <dbReference type="HAMAP-Rule" id="MF_00378"/>
    </source>
</evidence>
<keyword id="KW-0963">Cytoplasm</keyword>
<keyword id="KW-0269">Exonuclease</keyword>
<keyword id="KW-0378">Hydrolase</keyword>
<keyword id="KW-0540">Nuclease</keyword>
<accession>A6WQP2</accession>